<gene>
    <name type="primary">pyrD</name>
    <name type="ordered locus">BHWA1_02606</name>
</gene>
<accession>C0QYH6</accession>
<organism>
    <name type="scientific">Brachyspira hyodysenteriae (strain ATCC 49526 / WA1)</name>
    <dbReference type="NCBI Taxonomy" id="565034"/>
    <lineage>
        <taxon>Bacteria</taxon>
        <taxon>Pseudomonadati</taxon>
        <taxon>Spirochaetota</taxon>
        <taxon>Spirochaetia</taxon>
        <taxon>Brachyspirales</taxon>
        <taxon>Brachyspiraceae</taxon>
        <taxon>Brachyspira</taxon>
    </lineage>
</organism>
<evidence type="ECO:0000250" key="1"/>
<evidence type="ECO:0000305" key="2"/>
<name>PYRDB_BRAHW</name>
<dbReference type="EC" id="1.3.1.14"/>
<dbReference type="EMBL" id="CP001357">
    <property type="protein sequence ID" value="ACN85059.1"/>
    <property type="molecule type" value="Genomic_DNA"/>
</dbReference>
<dbReference type="RefSeq" id="WP_012672086.1">
    <property type="nucleotide sequence ID" value="NC_012225.1"/>
</dbReference>
<dbReference type="SMR" id="C0QYH6"/>
<dbReference type="STRING" id="565034.BHWA1_02606"/>
<dbReference type="GeneID" id="63963740"/>
<dbReference type="KEGG" id="bhy:BHWA1_02606"/>
<dbReference type="eggNOG" id="COG0167">
    <property type="taxonomic scope" value="Bacteria"/>
</dbReference>
<dbReference type="HOGENOM" id="CLU_042042_0_0_12"/>
<dbReference type="UniPathway" id="UPA00070">
    <property type="reaction ID" value="UER00945"/>
</dbReference>
<dbReference type="Proteomes" id="UP000001803">
    <property type="component" value="Chromosome"/>
</dbReference>
<dbReference type="GO" id="GO:0005737">
    <property type="term" value="C:cytoplasm"/>
    <property type="evidence" value="ECO:0007669"/>
    <property type="project" value="UniProtKB-SubCell"/>
</dbReference>
<dbReference type="GO" id="GO:0004589">
    <property type="term" value="F:dihydroorotate dehydrogenase (NAD+) activity"/>
    <property type="evidence" value="ECO:0007669"/>
    <property type="project" value="UniProtKB-EC"/>
</dbReference>
<dbReference type="GO" id="GO:0006207">
    <property type="term" value="P:'de novo' pyrimidine nucleobase biosynthetic process"/>
    <property type="evidence" value="ECO:0007669"/>
    <property type="project" value="InterPro"/>
</dbReference>
<dbReference type="GO" id="GO:0044205">
    <property type="term" value="P:'de novo' UMP biosynthetic process"/>
    <property type="evidence" value="ECO:0007669"/>
    <property type="project" value="UniProtKB-UniRule"/>
</dbReference>
<dbReference type="CDD" id="cd04740">
    <property type="entry name" value="DHOD_1B_like"/>
    <property type="match status" value="1"/>
</dbReference>
<dbReference type="FunFam" id="3.20.20.70:FF:000027">
    <property type="entry name" value="Dihydropyrimidine dehydrogenase [NADP(+)]"/>
    <property type="match status" value="1"/>
</dbReference>
<dbReference type="Gene3D" id="3.20.20.70">
    <property type="entry name" value="Aldolase class I"/>
    <property type="match status" value="1"/>
</dbReference>
<dbReference type="HAMAP" id="MF_00224">
    <property type="entry name" value="DHO_dh_type1"/>
    <property type="match status" value="1"/>
</dbReference>
<dbReference type="InterPro" id="IPR013785">
    <property type="entry name" value="Aldolase_TIM"/>
</dbReference>
<dbReference type="InterPro" id="IPR050074">
    <property type="entry name" value="DHO_dehydrogenase"/>
</dbReference>
<dbReference type="InterPro" id="IPR033888">
    <property type="entry name" value="DHOD_1B"/>
</dbReference>
<dbReference type="InterPro" id="IPR024920">
    <property type="entry name" value="Dihydroorotate_DH_1"/>
</dbReference>
<dbReference type="InterPro" id="IPR012135">
    <property type="entry name" value="Dihydroorotate_DH_1_2"/>
</dbReference>
<dbReference type="InterPro" id="IPR005720">
    <property type="entry name" value="Dihydroorotate_DH_cat"/>
</dbReference>
<dbReference type="InterPro" id="IPR001295">
    <property type="entry name" value="Dihydroorotate_DH_CS"/>
</dbReference>
<dbReference type="InterPro" id="IPR049622">
    <property type="entry name" value="Dihydroorotate_DH_I"/>
</dbReference>
<dbReference type="NCBIfam" id="NF005574">
    <property type="entry name" value="PRK07259.1"/>
    <property type="match status" value="1"/>
</dbReference>
<dbReference type="NCBIfam" id="TIGR01037">
    <property type="entry name" value="pyrD_sub1_fam"/>
    <property type="match status" value="1"/>
</dbReference>
<dbReference type="PANTHER" id="PTHR48109:SF1">
    <property type="entry name" value="DIHYDROOROTATE DEHYDROGENASE (FUMARATE)"/>
    <property type="match status" value="1"/>
</dbReference>
<dbReference type="PANTHER" id="PTHR48109">
    <property type="entry name" value="DIHYDROOROTATE DEHYDROGENASE (QUINONE), MITOCHONDRIAL-RELATED"/>
    <property type="match status" value="1"/>
</dbReference>
<dbReference type="Pfam" id="PF01180">
    <property type="entry name" value="DHO_dh"/>
    <property type="match status" value="1"/>
</dbReference>
<dbReference type="PIRSF" id="PIRSF000164">
    <property type="entry name" value="DHO_oxidase"/>
    <property type="match status" value="1"/>
</dbReference>
<dbReference type="SUPFAM" id="SSF51395">
    <property type="entry name" value="FMN-linked oxidoreductases"/>
    <property type="match status" value="1"/>
</dbReference>
<dbReference type="PROSITE" id="PS00912">
    <property type="entry name" value="DHODEHASE_2"/>
    <property type="match status" value="1"/>
</dbReference>
<sequence length="303" mass="32471">MSRLNINFLGKELKNNVITSSGCFGFGEEYSNYFDVNELGAVNLKGITLNKKDGNKGTRIAETPSGMINCIGLENPGIEYFKDNIIKNIKYSTPIILNINGATIDEYVKVAEIANEIERVDFVELNISCPNVKNGGMAFGASCESAESTTKAVKKVLSKKPLIVKLSPNVTDIASIAKAVEDAGADSVSLVNTFLSMKIDTKTRKPLLGNIFGGLSGACIRPIAVRMVYQVYKAVKIPIVGMGGITNYNDALEFILAGASLVSIGAGIFSNPILPIEVINGIDNYLKENNISNIKDIIGAAHL</sequence>
<reference key="1">
    <citation type="journal article" date="2009" name="PLoS ONE">
        <title>Genome sequence of the pathogenic intestinal spirochete Brachyspira hyodysenteriae reveals adaptations to its lifestyle in the porcine large intestine.</title>
        <authorList>
            <person name="Bellgard M.I."/>
            <person name="Wanchanthuek P."/>
            <person name="La T."/>
            <person name="Ryan K."/>
            <person name="Moolhuijzen P."/>
            <person name="Albertyn Z."/>
            <person name="Shaban B."/>
            <person name="Motro Y."/>
            <person name="Dunn D.S."/>
            <person name="Schibeci D."/>
            <person name="Hunter A."/>
            <person name="Barrero R."/>
            <person name="Phillips N.D."/>
            <person name="Hampson D.J."/>
        </authorList>
    </citation>
    <scope>NUCLEOTIDE SEQUENCE [LARGE SCALE GENOMIC DNA]</scope>
    <source>
        <strain>ATCC 49526 / WA1</strain>
    </source>
</reference>
<proteinExistence type="inferred from homology"/>
<feature type="chain" id="PRO_1000195047" description="Dihydroorotate dehydrogenase B (NAD(+)), catalytic subunit">
    <location>
        <begin position="1"/>
        <end position="303"/>
    </location>
</feature>
<feature type="active site" description="Nucleophile">
    <location>
        <position position="129"/>
    </location>
</feature>
<feature type="binding site" evidence="1">
    <location>
        <position position="21"/>
    </location>
    <ligand>
        <name>FMN</name>
        <dbReference type="ChEBI" id="CHEBI:58210"/>
    </ligand>
</feature>
<feature type="binding site" evidence="1">
    <location>
        <begin position="45"/>
        <end position="46"/>
    </location>
    <ligand>
        <name>FMN</name>
        <dbReference type="ChEBI" id="CHEBI:58210"/>
    </ligand>
</feature>
<feature type="binding site" evidence="1">
    <location>
        <position position="45"/>
    </location>
    <ligand>
        <name>substrate</name>
    </ligand>
</feature>
<feature type="binding site" evidence="1">
    <location>
        <begin position="69"/>
        <end position="73"/>
    </location>
    <ligand>
        <name>substrate</name>
    </ligand>
</feature>
<feature type="binding site" evidence="1">
    <location>
        <position position="98"/>
    </location>
    <ligand>
        <name>FMN</name>
        <dbReference type="ChEBI" id="CHEBI:58210"/>
    </ligand>
</feature>
<feature type="binding site" evidence="1">
    <location>
        <position position="126"/>
    </location>
    <ligand>
        <name>FMN</name>
        <dbReference type="ChEBI" id="CHEBI:58210"/>
    </ligand>
</feature>
<feature type="binding site" evidence="1">
    <location>
        <position position="126"/>
    </location>
    <ligand>
        <name>substrate</name>
    </ligand>
</feature>
<feature type="binding site" evidence="1">
    <location>
        <position position="165"/>
    </location>
    <ligand>
        <name>FMN</name>
        <dbReference type="ChEBI" id="CHEBI:58210"/>
    </ligand>
</feature>
<feature type="binding site" evidence="1">
    <location>
        <position position="191"/>
    </location>
    <ligand>
        <name>FMN</name>
        <dbReference type="ChEBI" id="CHEBI:58210"/>
    </ligand>
</feature>
<feature type="binding site" evidence="1">
    <location>
        <begin position="192"/>
        <end position="193"/>
    </location>
    <ligand>
        <name>substrate</name>
    </ligand>
</feature>
<feature type="binding site" evidence="1">
    <location>
        <position position="217"/>
    </location>
    <ligand>
        <name>FMN</name>
        <dbReference type="ChEBI" id="CHEBI:58210"/>
    </ligand>
</feature>
<feature type="binding site" evidence="1">
    <location>
        <begin position="243"/>
        <end position="244"/>
    </location>
    <ligand>
        <name>FMN</name>
        <dbReference type="ChEBI" id="CHEBI:58210"/>
    </ligand>
</feature>
<comment type="function">
    <text evidence="1">Catalyzes the conversion of dihydroorotate to orotate with NAD(+) as electron acceptor.</text>
</comment>
<comment type="catalytic activity">
    <reaction>
        <text>(S)-dihydroorotate + NAD(+) = orotate + NADH + H(+)</text>
        <dbReference type="Rhea" id="RHEA:13513"/>
        <dbReference type="ChEBI" id="CHEBI:15378"/>
        <dbReference type="ChEBI" id="CHEBI:30839"/>
        <dbReference type="ChEBI" id="CHEBI:30864"/>
        <dbReference type="ChEBI" id="CHEBI:57540"/>
        <dbReference type="ChEBI" id="CHEBI:57945"/>
        <dbReference type="EC" id="1.3.1.14"/>
    </reaction>
</comment>
<comment type="cofactor">
    <cofactor evidence="1">
        <name>FMN</name>
        <dbReference type="ChEBI" id="CHEBI:58210"/>
    </cofactor>
    <text evidence="1">Binds 1 FMN per subunit.</text>
</comment>
<comment type="pathway">
    <text>Pyrimidine metabolism; UMP biosynthesis via de novo pathway; orotate from (S)-dihydroorotate (NAD(+) route): step 1/1.</text>
</comment>
<comment type="subunit">
    <text evidence="1">Heterotetramer of 2 PyrK and 2 PyrD type B subunits.</text>
</comment>
<comment type="subcellular location">
    <subcellularLocation>
        <location evidence="1">Cytoplasm</location>
    </subcellularLocation>
</comment>
<comment type="similarity">
    <text evidence="2">Belongs to the dihydroorotate dehydrogenase family. Type 1 subfamily.</text>
</comment>
<keyword id="KW-0963">Cytoplasm</keyword>
<keyword id="KW-0285">Flavoprotein</keyword>
<keyword id="KW-0288">FMN</keyword>
<keyword id="KW-0520">NAD</keyword>
<keyword id="KW-0560">Oxidoreductase</keyword>
<keyword id="KW-0665">Pyrimidine biosynthesis</keyword>
<protein>
    <recommendedName>
        <fullName>Dihydroorotate dehydrogenase B (NAD(+)), catalytic subunit</fullName>
        <shortName>DHOD B</shortName>
        <shortName>DHODase B</shortName>
        <shortName>DHOdehase B</shortName>
        <ecNumber>1.3.1.14</ecNumber>
    </recommendedName>
    <alternativeName>
        <fullName>Dihydroorotate oxidase B</fullName>
    </alternativeName>
    <alternativeName>
        <fullName>Orotate reductase (NADH)</fullName>
    </alternativeName>
</protein>